<evidence type="ECO:0000255" key="1">
    <source>
        <dbReference type="HAMAP-Rule" id="MF_01315"/>
    </source>
</evidence>
<evidence type="ECO:0000256" key="2">
    <source>
        <dbReference type="SAM" id="MobiDB-lite"/>
    </source>
</evidence>
<evidence type="ECO:0000305" key="3"/>
<gene>
    <name evidence="1" type="primary">rpsM</name>
    <name type="ordered locus">CBUD_1832</name>
</gene>
<keyword id="KW-0687">Ribonucleoprotein</keyword>
<keyword id="KW-0689">Ribosomal protein</keyword>
<keyword id="KW-0694">RNA-binding</keyword>
<keyword id="KW-0699">rRNA-binding</keyword>
<keyword id="KW-0820">tRNA-binding</keyword>
<comment type="function">
    <text evidence="1">Located at the top of the head of the 30S subunit, it contacts several helices of the 16S rRNA. In the 70S ribosome it contacts the 23S rRNA (bridge B1a) and protein L5 of the 50S subunit (bridge B1b), connecting the 2 subunits; these bridges are implicated in subunit movement. Contacts the tRNAs in the A and P-sites.</text>
</comment>
<comment type="subunit">
    <text evidence="1">Part of the 30S ribosomal subunit. Forms a loose heterodimer with protein S19. Forms two bridges to the 50S subunit in the 70S ribosome.</text>
</comment>
<comment type="similarity">
    <text evidence="1">Belongs to the universal ribosomal protein uS13 family.</text>
</comment>
<organism>
    <name type="scientific">Coxiella burnetii (strain Dugway 5J108-111)</name>
    <dbReference type="NCBI Taxonomy" id="434922"/>
    <lineage>
        <taxon>Bacteria</taxon>
        <taxon>Pseudomonadati</taxon>
        <taxon>Pseudomonadota</taxon>
        <taxon>Gammaproteobacteria</taxon>
        <taxon>Legionellales</taxon>
        <taxon>Coxiellaceae</taxon>
        <taxon>Coxiella</taxon>
    </lineage>
</organism>
<name>RS13_COXBN</name>
<accession>A9KD09</accession>
<dbReference type="EMBL" id="CP000733">
    <property type="protein sequence ID" value="ABS77345.1"/>
    <property type="molecule type" value="Genomic_DNA"/>
</dbReference>
<dbReference type="RefSeq" id="WP_005771503.1">
    <property type="nucleotide sequence ID" value="NC_009727.1"/>
</dbReference>
<dbReference type="SMR" id="A9KD09"/>
<dbReference type="KEGG" id="cbd:CBUD_1832"/>
<dbReference type="HOGENOM" id="CLU_103849_1_2_6"/>
<dbReference type="Proteomes" id="UP000008555">
    <property type="component" value="Chromosome"/>
</dbReference>
<dbReference type="GO" id="GO:0005829">
    <property type="term" value="C:cytosol"/>
    <property type="evidence" value="ECO:0007669"/>
    <property type="project" value="TreeGrafter"/>
</dbReference>
<dbReference type="GO" id="GO:0015935">
    <property type="term" value="C:small ribosomal subunit"/>
    <property type="evidence" value="ECO:0007669"/>
    <property type="project" value="TreeGrafter"/>
</dbReference>
<dbReference type="GO" id="GO:0019843">
    <property type="term" value="F:rRNA binding"/>
    <property type="evidence" value="ECO:0007669"/>
    <property type="project" value="UniProtKB-UniRule"/>
</dbReference>
<dbReference type="GO" id="GO:0003735">
    <property type="term" value="F:structural constituent of ribosome"/>
    <property type="evidence" value="ECO:0007669"/>
    <property type="project" value="InterPro"/>
</dbReference>
<dbReference type="GO" id="GO:0000049">
    <property type="term" value="F:tRNA binding"/>
    <property type="evidence" value="ECO:0007669"/>
    <property type="project" value="UniProtKB-UniRule"/>
</dbReference>
<dbReference type="GO" id="GO:0006412">
    <property type="term" value="P:translation"/>
    <property type="evidence" value="ECO:0007669"/>
    <property type="project" value="UniProtKB-UniRule"/>
</dbReference>
<dbReference type="FunFam" id="1.10.8.50:FF:000001">
    <property type="entry name" value="30S ribosomal protein S13"/>
    <property type="match status" value="1"/>
</dbReference>
<dbReference type="Gene3D" id="1.10.8.50">
    <property type="match status" value="1"/>
</dbReference>
<dbReference type="Gene3D" id="4.10.910.10">
    <property type="entry name" value="30s ribosomal protein s13, domain 2"/>
    <property type="match status" value="1"/>
</dbReference>
<dbReference type="HAMAP" id="MF_01315">
    <property type="entry name" value="Ribosomal_uS13"/>
    <property type="match status" value="1"/>
</dbReference>
<dbReference type="InterPro" id="IPR027437">
    <property type="entry name" value="Rbsml_uS13_C"/>
</dbReference>
<dbReference type="InterPro" id="IPR001892">
    <property type="entry name" value="Ribosomal_uS13"/>
</dbReference>
<dbReference type="InterPro" id="IPR010979">
    <property type="entry name" value="Ribosomal_uS13-like_H2TH"/>
</dbReference>
<dbReference type="InterPro" id="IPR019980">
    <property type="entry name" value="Ribosomal_uS13_bac-type"/>
</dbReference>
<dbReference type="InterPro" id="IPR018269">
    <property type="entry name" value="Ribosomal_uS13_CS"/>
</dbReference>
<dbReference type="NCBIfam" id="TIGR03631">
    <property type="entry name" value="uS13_bact"/>
    <property type="match status" value="1"/>
</dbReference>
<dbReference type="PANTHER" id="PTHR10871">
    <property type="entry name" value="30S RIBOSOMAL PROTEIN S13/40S RIBOSOMAL PROTEIN S18"/>
    <property type="match status" value="1"/>
</dbReference>
<dbReference type="PANTHER" id="PTHR10871:SF1">
    <property type="entry name" value="SMALL RIBOSOMAL SUBUNIT PROTEIN US13M"/>
    <property type="match status" value="1"/>
</dbReference>
<dbReference type="Pfam" id="PF00416">
    <property type="entry name" value="Ribosomal_S13"/>
    <property type="match status" value="1"/>
</dbReference>
<dbReference type="PIRSF" id="PIRSF002134">
    <property type="entry name" value="Ribosomal_S13"/>
    <property type="match status" value="1"/>
</dbReference>
<dbReference type="SUPFAM" id="SSF46946">
    <property type="entry name" value="S13-like H2TH domain"/>
    <property type="match status" value="1"/>
</dbReference>
<dbReference type="PROSITE" id="PS00646">
    <property type="entry name" value="RIBOSOMAL_S13_1"/>
    <property type="match status" value="1"/>
</dbReference>
<dbReference type="PROSITE" id="PS50159">
    <property type="entry name" value="RIBOSOMAL_S13_2"/>
    <property type="match status" value="1"/>
</dbReference>
<reference key="1">
    <citation type="journal article" date="2009" name="Infect. Immun.">
        <title>Comparative genomics reveal extensive transposon-mediated genomic plasticity and diversity among potential effector proteins within the genus Coxiella.</title>
        <authorList>
            <person name="Beare P.A."/>
            <person name="Unsworth N."/>
            <person name="Andoh M."/>
            <person name="Voth D.E."/>
            <person name="Omsland A."/>
            <person name="Gilk S.D."/>
            <person name="Williams K.P."/>
            <person name="Sobral B.W."/>
            <person name="Kupko J.J. III"/>
            <person name="Porcella S.F."/>
            <person name="Samuel J.E."/>
            <person name="Heinzen R.A."/>
        </authorList>
    </citation>
    <scope>NUCLEOTIDE SEQUENCE [LARGE SCALE GENOMIC DNA]</scope>
    <source>
        <strain>Dugway 5J108-111</strain>
    </source>
</reference>
<proteinExistence type="inferred from homology"/>
<feature type="chain" id="PRO_1000086236" description="Small ribosomal subunit protein uS13">
    <location>
        <begin position="1"/>
        <end position="119"/>
    </location>
</feature>
<feature type="region of interest" description="Disordered" evidence="2">
    <location>
        <begin position="90"/>
        <end position="119"/>
    </location>
</feature>
<feature type="compositionally biased region" description="Basic residues" evidence="2">
    <location>
        <begin position="91"/>
        <end position="119"/>
    </location>
</feature>
<sequence>MAARIAGVNIPVQKHARIALQAIYGIGNSRALEICKEAKIDPATKVKDLSEAELDALRTEVGKFSVEGDLRRERSMDIKRKMDLGTYEGIRHRRGLPLRGQRTRSNARTRKGKRKPIRS</sequence>
<protein>
    <recommendedName>
        <fullName evidence="1">Small ribosomal subunit protein uS13</fullName>
    </recommendedName>
    <alternativeName>
        <fullName evidence="3">30S ribosomal protein S13</fullName>
    </alternativeName>
</protein>